<evidence type="ECO:0000255" key="1">
    <source>
        <dbReference type="HAMAP-Rule" id="MF_00383"/>
    </source>
</evidence>
<evidence type="ECO:0000255" key="2">
    <source>
        <dbReference type="PROSITE-ProRule" id="PRU00469"/>
    </source>
</evidence>
<protein>
    <recommendedName>
        <fullName evidence="1">Transcription initiation factor IIB</fullName>
        <shortName evidence="1">TFIIB</shortName>
    </recommendedName>
</protein>
<dbReference type="EMBL" id="AE000782">
    <property type="protein sequence ID" value="AAB89947.1"/>
    <property type="molecule type" value="Genomic_DNA"/>
</dbReference>
<dbReference type="PIR" id="B69412">
    <property type="entry name" value="B69412"/>
</dbReference>
<dbReference type="RefSeq" id="WP_010878796.1">
    <property type="nucleotide sequence ID" value="NC_000917.1"/>
</dbReference>
<dbReference type="SMR" id="O28970"/>
<dbReference type="STRING" id="224325.AF_1299"/>
<dbReference type="PaxDb" id="224325-AF_1299"/>
<dbReference type="EnsemblBacteria" id="AAB89947">
    <property type="protein sequence ID" value="AAB89947"/>
    <property type="gene ID" value="AF_1299"/>
</dbReference>
<dbReference type="GeneID" id="1484525"/>
<dbReference type="KEGG" id="afu:AF_1299"/>
<dbReference type="eggNOG" id="arCOG01981">
    <property type="taxonomic scope" value="Archaea"/>
</dbReference>
<dbReference type="HOGENOM" id="CLU_043736_0_1_2"/>
<dbReference type="OrthoDB" id="7429at2157"/>
<dbReference type="PhylomeDB" id="O28970"/>
<dbReference type="Proteomes" id="UP000002199">
    <property type="component" value="Chromosome"/>
</dbReference>
<dbReference type="GO" id="GO:0097550">
    <property type="term" value="C:transcription preinitiation complex"/>
    <property type="evidence" value="ECO:0007669"/>
    <property type="project" value="TreeGrafter"/>
</dbReference>
<dbReference type="GO" id="GO:0003700">
    <property type="term" value="F:DNA-binding transcription factor activity"/>
    <property type="evidence" value="ECO:0007669"/>
    <property type="project" value="UniProtKB-UniRule"/>
</dbReference>
<dbReference type="GO" id="GO:0017025">
    <property type="term" value="F:TBP-class protein binding"/>
    <property type="evidence" value="ECO:0007669"/>
    <property type="project" value="InterPro"/>
</dbReference>
<dbReference type="GO" id="GO:0008270">
    <property type="term" value="F:zinc ion binding"/>
    <property type="evidence" value="ECO:0007669"/>
    <property type="project" value="UniProtKB-UniRule"/>
</dbReference>
<dbReference type="GO" id="GO:0070897">
    <property type="term" value="P:transcription preinitiation complex assembly"/>
    <property type="evidence" value="ECO:0007669"/>
    <property type="project" value="InterPro"/>
</dbReference>
<dbReference type="CDD" id="cd20549">
    <property type="entry name" value="CYCLIN_TFIIB_archaea_like_rpt1"/>
    <property type="match status" value="1"/>
</dbReference>
<dbReference type="CDD" id="cd20550">
    <property type="entry name" value="CYCLIN_TFIIB_archaea_like_rpt2"/>
    <property type="match status" value="1"/>
</dbReference>
<dbReference type="FunFam" id="1.10.472.10:FF:000023">
    <property type="entry name" value="Transcription initiation factor IIB"/>
    <property type="match status" value="1"/>
</dbReference>
<dbReference type="FunFam" id="1.10.472.170:FF:000001">
    <property type="entry name" value="Transcription initiation factor IIB"/>
    <property type="match status" value="1"/>
</dbReference>
<dbReference type="Gene3D" id="1.10.472.170">
    <property type="match status" value="1"/>
</dbReference>
<dbReference type="Gene3D" id="1.10.472.10">
    <property type="entry name" value="Cyclin-like"/>
    <property type="match status" value="1"/>
</dbReference>
<dbReference type="HAMAP" id="MF_00383">
    <property type="entry name" value="TF2B_arch"/>
    <property type="match status" value="1"/>
</dbReference>
<dbReference type="InterPro" id="IPR013763">
    <property type="entry name" value="Cyclin-like_dom"/>
</dbReference>
<dbReference type="InterPro" id="IPR036915">
    <property type="entry name" value="Cyclin-like_sf"/>
</dbReference>
<dbReference type="InterPro" id="IPR000812">
    <property type="entry name" value="TFIIB"/>
</dbReference>
<dbReference type="InterPro" id="IPR023484">
    <property type="entry name" value="TFIIB_arc"/>
</dbReference>
<dbReference type="InterPro" id="IPR023486">
    <property type="entry name" value="TFIIB_CS"/>
</dbReference>
<dbReference type="InterPro" id="IPR013150">
    <property type="entry name" value="TFIIB_cyclin"/>
</dbReference>
<dbReference type="InterPro" id="IPR013137">
    <property type="entry name" value="Znf_TFIIB"/>
</dbReference>
<dbReference type="NCBIfam" id="NF001658">
    <property type="entry name" value="PRK00423.1"/>
    <property type="match status" value="1"/>
</dbReference>
<dbReference type="PANTHER" id="PTHR11618:SF13">
    <property type="entry name" value="TRANSCRIPTION INITIATION FACTOR IIB"/>
    <property type="match status" value="1"/>
</dbReference>
<dbReference type="PANTHER" id="PTHR11618">
    <property type="entry name" value="TRANSCRIPTION INITIATION FACTOR IIB-RELATED"/>
    <property type="match status" value="1"/>
</dbReference>
<dbReference type="Pfam" id="PF00382">
    <property type="entry name" value="TFIIB"/>
    <property type="match status" value="2"/>
</dbReference>
<dbReference type="Pfam" id="PF08271">
    <property type="entry name" value="Zn_Ribbon_TF"/>
    <property type="match status" value="1"/>
</dbReference>
<dbReference type="PRINTS" id="PR00685">
    <property type="entry name" value="TIFACTORIIB"/>
</dbReference>
<dbReference type="SMART" id="SM00385">
    <property type="entry name" value="CYCLIN"/>
    <property type="match status" value="2"/>
</dbReference>
<dbReference type="SUPFAM" id="SSF47954">
    <property type="entry name" value="Cyclin-like"/>
    <property type="match status" value="2"/>
</dbReference>
<dbReference type="SUPFAM" id="SSF57783">
    <property type="entry name" value="Zinc beta-ribbon"/>
    <property type="match status" value="1"/>
</dbReference>
<dbReference type="PROSITE" id="PS00782">
    <property type="entry name" value="TFIIB"/>
    <property type="match status" value="2"/>
</dbReference>
<dbReference type="PROSITE" id="PS51134">
    <property type="entry name" value="ZF_TFIIB"/>
    <property type="match status" value="1"/>
</dbReference>
<organism>
    <name type="scientific">Archaeoglobus fulgidus (strain ATCC 49558 / DSM 4304 / JCM 9628 / NBRC 100126 / VC-16)</name>
    <dbReference type="NCBI Taxonomy" id="224325"/>
    <lineage>
        <taxon>Archaea</taxon>
        <taxon>Methanobacteriati</taxon>
        <taxon>Methanobacteriota</taxon>
        <taxon>Archaeoglobi</taxon>
        <taxon>Archaeoglobales</taxon>
        <taxon>Archaeoglobaceae</taxon>
        <taxon>Archaeoglobus</taxon>
    </lineage>
</organism>
<feature type="chain" id="PRO_0000119310" description="Transcription initiation factor IIB">
    <location>
        <begin position="1"/>
        <end position="326"/>
    </location>
</feature>
<feature type="repeat" description="1">
    <location>
        <begin position="143"/>
        <end position="226"/>
    </location>
</feature>
<feature type="repeat" description="2">
    <location>
        <begin position="237"/>
        <end position="318"/>
    </location>
</feature>
<feature type="zinc finger region" description="TFIIB-type" evidence="2">
    <location>
        <begin position="26"/>
        <end position="57"/>
    </location>
</feature>
<feature type="binding site" evidence="2">
    <location>
        <position position="30"/>
    </location>
    <ligand>
        <name>Zn(2+)</name>
        <dbReference type="ChEBI" id="CHEBI:29105"/>
    </ligand>
</feature>
<feature type="binding site" evidence="2">
    <location>
        <position position="33"/>
    </location>
    <ligand>
        <name>Zn(2+)</name>
        <dbReference type="ChEBI" id="CHEBI:29105"/>
    </ligand>
</feature>
<feature type="binding site" evidence="2">
    <location>
        <position position="49"/>
    </location>
    <ligand>
        <name>Zn(2+)</name>
        <dbReference type="ChEBI" id="CHEBI:29105"/>
    </ligand>
</feature>
<feature type="binding site" evidence="2">
    <location>
        <position position="52"/>
    </location>
    <ligand>
        <name>Zn(2+)</name>
        <dbReference type="ChEBI" id="CHEBI:29105"/>
    </ligand>
</feature>
<reference key="1">
    <citation type="journal article" date="1997" name="Nature">
        <title>The complete genome sequence of the hyperthermophilic, sulphate-reducing archaeon Archaeoglobus fulgidus.</title>
        <authorList>
            <person name="Klenk H.-P."/>
            <person name="Clayton R.A."/>
            <person name="Tomb J.-F."/>
            <person name="White O."/>
            <person name="Nelson K.E."/>
            <person name="Ketchum K.A."/>
            <person name="Dodson R.J."/>
            <person name="Gwinn M.L."/>
            <person name="Hickey E.K."/>
            <person name="Peterson J.D."/>
            <person name="Richardson D.L."/>
            <person name="Kerlavage A.R."/>
            <person name="Graham D.E."/>
            <person name="Kyrpides N.C."/>
            <person name="Fleischmann R.D."/>
            <person name="Quackenbush J."/>
            <person name="Lee N.H."/>
            <person name="Sutton G.G."/>
            <person name="Gill S.R."/>
            <person name="Kirkness E.F."/>
            <person name="Dougherty B.A."/>
            <person name="McKenney K."/>
            <person name="Adams M.D."/>
            <person name="Loftus B.J."/>
            <person name="Peterson S.N."/>
            <person name="Reich C.I."/>
            <person name="McNeil L.K."/>
            <person name="Badger J.H."/>
            <person name="Glodek A."/>
            <person name="Zhou L."/>
            <person name="Overbeek R."/>
            <person name="Gocayne J.D."/>
            <person name="Weidman J.F."/>
            <person name="McDonald L.A."/>
            <person name="Utterback T.R."/>
            <person name="Cotton M.D."/>
            <person name="Spriggs T."/>
            <person name="Artiach P."/>
            <person name="Kaine B.P."/>
            <person name="Sykes S.M."/>
            <person name="Sadow P.W."/>
            <person name="D'Andrea K.P."/>
            <person name="Bowman C."/>
            <person name="Fujii C."/>
            <person name="Garland S.A."/>
            <person name="Mason T.M."/>
            <person name="Olsen G.J."/>
            <person name="Fraser C.M."/>
            <person name="Smith H.O."/>
            <person name="Woese C.R."/>
            <person name="Venter J.C."/>
        </authorList>
    </citation>
    <scope>NUCLEOTIDE SEQUENCE [LARGE SCALE GENOMIC DNA]</scope>
    <source>
        <strain>ATCC 49558 / DSM 4304 / JCM 9628 / NBRC 100126 / VC-16</strain>
    </source>
</reference>
<keyword id="KW-0479">Metal-binding</keyword>
<keyword id="KW-1185">Reference proteome</keyword>
<keyword id="KW-0677">Repeat</keyword>
<keyword id="KW-0804">Transcription</keyword>
<keyword id="KW-0805">Transcription regulation</keyword>
<keyword id="KW-0862">Zinc</keyword>
<keyword id="KW-0863">Zinc-finger</keyword>
<proteinExistence type="inferred from homology"/>
<comment type="function">
    <text evidence="1">Stabilizes TBP binding to an archaeal box-A promoter. Also responsible for recruiting RNA polymerase II to the pre-initiation complex (DNA-TBP-TFIIB).</text>
</comment>
<comment type="similarity">
    <text evidence="1">Belongs to the TFIIB family.</text>
</comment>
<accession>O28970</accession>
<name>TF2B_ARCFU</name>
<gene>
    <name evidence="1" type="primary">tfb</name>
    <name type="ordered locus">AF_1299</name>
</gene>
<sequence>MAEVEKVREKEVEKEVERKEIEREEDVEVCPECGSPRLIRDYRRGEFICQDCGLVIEDTYIDAGPEWRAFDSEQRDKRSRVGAPVTYTIHDKGLSTIIDWSNKDYYGKAISVRNRAQLFRLRKWQRRIRISNATERNLAFALSELDRMASALGLPKSVRETAAVIYRKAVEKNLIRGRSIEGVVAAALYAACRQAGVPRTLDEIATYSRVDRKEIGRTYRFITRELGLKLMPTSPADYIPRFCAALGLSGEVQKKAIEIIKKAEERELTSGRGPTGVAAAALYVASILLGERRTQREVAEVAGVTEVTIRNRYKELAEKLGIEIIL</sequence>